<reference key="1">
    <citation type="journal article" date="2005" name="Gene">
        <title>Newly sequenced eRF1s from ciliates: the diversity of stop codon usage and the molecular surfaces that are important for stop codon interactions.</title>
        <authorList>
            <person name="Kim O.T.P."/>
            <person name="Yura K."/>
            <person name="Go N."/>
            <person name="Harumoto T."/>
        </authorList>
    </citation>
    <scope>NUCLEOTIDE SEQUENCE [MRNA]</scope>
    <source>
        <strain>Stock L / Golinska</strain>
    </source>
</reference>
<comment type="function">
    <text evidence="1">Directs the termination of nascent peptide synthesis (translation) in response to the termination codons UAA and possibly also UAG and UGA.</text>
</comment>
<comment type="subunit">
    <text evidence="1">Heterodimer of two subunits, one of which binds GTP.</text>
</comment>
<comment type="subcellular location">
    <subcellularLocation>
        <location evidence="1">Cytoplasm</location>
    </subcellularLocation>
</comment>
<comment type="similarity">
    <text evidence="2">Belongs to the eukaryotic release factor 1 family.</text>
</comment>
<feature type="chain" id="PRO_0000143152" description="Eukaryotic peptide chain release factor subunit 1">
    <location>
        <begin position="1"/>
        <end position="436"/>
    </location>
</feature>
<gene>
    <name type="primary">eRF1</name>
</gene>
<evidence type="ECO:0000250" key="1"/>
<evidence type="ECO:0000305" key="2"/>
<keyword id="KW-0963">Cytoplasm</keyword>
<keyword id="KW-0648">Protein biosynthesis</keyword>
<protein>
    <recommendedName>
        <fullName>Eukaryotic peptide chain release factor subunit 1</fullName>
        <shortName>Eukaryotic release factor 1</shortName>
        <shortName>eRF1</shortName>
    </recommendedName>
</protein>
<name>ERF1_DILMA</name>
<accession>Q5CD96</accession>
<organism>
    <name type="scientific">Dileptus margaritifer</name>
    <name type="common">Ciliate</name>
    <name type="synonym">Amphileptus margaritifer</name>
    <dbReference type="NCBI Taxonomy" id="197863"/>
    <lineage>
        <taxon>Eukaryota</taxon>
        <taxon>Sar</taxon>
        <taxon>Alveolata</taxon>
        <taxon>Ciliophora</taxon>
        <taxon>Intramacronucleata</taxon>
        <taxon>Litostomatea</taxon>
        <taxon>Haptoria</taxon>
        <taxon>Haptorida</taxon>
        <taxon>Dileptidae</taxon>
        <taxon>Dileptus</taxon>
    </lineage>
</organism>
<dbReference type="EMBL" id="AB086369">
    <property type="protein sequence ID" value="BAD90944.1"/>
    <property type="molecule type" value="mRNA"/>
</dbReference>
<dbReference type="SMR" id="Q5CD96"/>
<dbReference type="GO" id="GO:0005737">
    <property type="term" value="C:cytoplasm"/>
    <property type="evidence" value="ECO:0007669"/>
    <property type="project" value="UniProtKB-SubCell"/>
</dbReference>
<dbReference type="GO" id="GO:0003747">
    <property type="term" value="F:translation release factor activity"/>
    <property type="evidence" value="ECO:0007669"/>
    <property type="project" value="InterPro"/>
</dbReference>
<dbReference type="FunFam" id="3.30.1330.30:FF:000032">
    <property type="entry name" value="Eukaryotic peptide chain release factor subunit 1"/>
    <property type="match status" value="1"/>
</dbReference>
<dbReference type="FunFam" id="3.30.420.60:FF:000003">
    <property type="entry name" value="Peptide chain release factor subunit 1"/>
    <property type="match status" value="1"/>
</dbReference>
<dbReference type="FunFam" id="3.30.960.10:FF:000003">
    <property type="entry name" value="Peptide chain release factor subunit 1"/>
    <property type="match status" value="1"/>
</dbReference>
<dbReference type="Gene3D" id="3.30.1330.30">
    <property type="match status" value="1"/>
</dbReference>
<dbReference type="Gene3D" id="3.30.960.10">
    <property type="entry name" value="eRF1 domain 1"/>
    <property type="match status" value="1"/>
</dbReference>
<dbReference type="Gene3D" id="3.30.420.60">
    <property type="entry name" value="eRF1 domain 2"/>
    <property type="match status" value="1"/>
</dbReference>
<dbReference type="InterPro" id="IPR042226">
    <property type="entry name" value="eFR1_2_sf"/>
</dbReference>
<dbReference type="InterPro" id="IPR005140">
    <property type="entry name" value="eRF1_1_Pelota"/>
</dbReference>
<dbReference type="InterPro" id="IPR024049">
    <property type="entry name" value="eRF1_1_sf"/>
</dbReference>
<dbReference type="InterPro" id="IPR005141">
    <property type="entry name" value="eRF1_2"/>
</dbReference>
<dbReference type="InterPro" id="IPR005142">
    <property type="entry name" value="eRF1_3"/>
</dbReference>
<dbReference type="InterPro" id="IPR004403">
    <property type="entry name" value="Peptide_chain-rel_eRF1/aRF1"/>
</dbReference>
<dbReference type="InterPro" id="IPR029064">
    <property type="entry name" value="Ribosomal_eL30-like_sf"/>
</dbReference>
<dbReference type="NCBIfam" id="TIGR03676">
    <property type="entry name" value="aRF1_eRF1"/>
    <property type="match status" value="1"/>
</dbReference>
<dbReference type="PANTHER" id="PTHR10113">
    <property type="entry name" value="PEPTIDE CHAIN RELEASE FACTOR SUBUNIT 1"/>
    <property type="match status" value="1"/>
</dbReference>
<dbReference type="Pfam" id="PF03463">
    <property type="entry name" value="eRF1_1"/>
    <property type="match status" value="1"/>
</dbReference>
<dbReference type="Pfam" id="PF03464">
    <property type="entry name" value="eRF1_2"/>
    <property type="match status" value="1"/>
</dbReference>
<dbReference type="Pfam" id="PF03465">
    <property type="entry name" value="eRF1_3"/>
    <property type="match status" value="1"/>
</dbReference>
<dbReference type="SMART" id="SM01194">
    <property type="entry name" value="eRF1_1"/>
    <property type="match status" value="1"/>
</dbReference>
<dbReference type="SUPFAM" id="SSF55315">
    <property type="entry name" value="L30e-like"/>
    <property type="match status" value="1"/>
</dbReference>
<dbReference type="SUPFAM" id="SSF55481">
    <property type="entry name" value="N-terminal domain of eukaryotic peptide chain release factor subunit 1, ERF1"/>
    <property type="match status" value="1"/>
</dbReference>
<dbReference type="SUPFAM" id="SSF53137">
    <property type="entry name" value="Translational machinery components"/>
    <property type="match status" value="1"/>
</dbReference>
<proteinExistence type="evidence at transcript level"/>
<sequence>MLDKDEDAEYERSVEMFRLKKLIHKLDNLKGSGTSMISLIINYKDQINPFMKMLVDEVGKASNIKSRVTRQNVTDALTSTMEKLKLYNKTPNNGLIIYCGLASEGDSGEKMFKIDMEPFKPINTSLYRCDSVFHTEEVKKLLEDNDRFGFLIMDGNGSLFGSVQGATRTVIQKFLVDLPKKHGRGGQSSNRFARIRTERRHNYLRKVAETMTAVFITNDRPNVKGLILAGSADFKTDLNKSDLFDPRLSPLVIKIVDIAYGGENGFNQAIELSSDALRNVKFVHEKKIVGRFFDEISKDTGRFVFGLKDTMEGLEYGAVEVLMIFENLEHNRLSLKDNNNTVTFKIFPKKETPSGNKFRDENGVEYEIIDNTPLSEWFLDNYKKFGTHLEIITDKSSEGNQFVKGFGGIGGILRYKMEQTHGDVETEDAFNEDDFI</sequence>